<keyword id="KW-0968">Cytoplasmic vesicle</keyword>
<keyword id="KW-0256">Endoplasmic reticulum</keyword>
<keyword id="KW-0931">ER-Golgi transport</keyword>
<keyword id="KW-0472">Membrane</keyword>
<keyword id="KW-0479">Metal-binding</keyword>
<keyword id="KW-0653">Protein transport</keyword>
<keyword id="KW-1185">Reference proteome</keyword>
<keyword id="KW-0813">Transport</keyword>
<keyword id="KW-0862">Zinc</keyword>
<comment type="function">
    <text evidence="2">Component of the coat protein complex II (COPII) which promotes the formation of transport vesicles from the endoplasmic reticulum (ER) (By similarity). The coat has two main functions, the physical deformation of the endoplasmic reticulum membrane into vesicles and the selection of cargo molecules (By similarity).</text>
</comment>
<comment type="subunit">
    <text evidence="1 3">Component of the coat protein complex II (COPII), composed of at least five proteins: the Sec23/24 complex, the Sec13/31 complex and Sar1 (By similarity). Interacts with SEC24A (PubMed:25315606).</text>
</comment>
<comment type="subcellular location">
    <subcellularLocation>
        <location evidence="2">Cytoplasmic vesicle</location>
        <location evidence="2">COPII-coated vesicle membrane</location>
        <topology evidence="2">Peripheral membrane protein</topology>
        <orientation evidence="2">Cytoplasmic side</orientation>
    </subcellularLocation>
    <subcellularLocation>
        <location evidence="2">Endoplasmic reticulum membrane</location>
        <topology evidence="2">Peripheral membrane protein</topology>
        <orientation evidence="2">Cytoplasmic side</orientation>
    </subcellularLocation>
    <subcellularLocation>
        <location evidence="2">Membrane</location>
        <topology evidence="2">Peripheral membrane protein</topology>
        <orientation evidence="2">Cytoplasmic side</orientation>
    </subcellularLocation>
</comment>
<comment type="similarity">
    <text evidence="7">Belongs to the SEC23/SEC24 family. SEC23 subfamily.</text>
</comment>
<comment type="sequence caution" evidence="7">
    <conflict type="erroneous gene model prediction">
        <sequence resource="EMBL-CDS" id="AAF79733"/>
    </conflict>
</comment>
<proteinExistence type="evidence at protein level"/>
<evidence type="ECO:0000250" key="1">
    <source>
        <dbReference type="UniProtKB" id="O95486"/>
    </source>
</evidence>
<evidence type="ECO:0000250" key="2">
    <source>
        <dbReference type="UniProtKB" id="P15303"/>
    </source>
</evidence>
<evidence type="ECO:0000269" key="3">
    <source>
    </source>
</evidence>
<evidence type="ECO:0000303" key="4">
    <source>
    </source>
</evidence>
<evidence type="ECO:0000303" key="5">
    <source>
    </source>
</evidence>
<evidence type="ECO:0000303" key="6">
    <source>
    </source>
</evidence>
<evidence type="ECO:0000305" key="7"/>
<evidence type="ECO:0000312" key="8">
    <source>
        <dbReference type="Araport" id="AT1G05520"/>
    </source>
</evidence>
<evidence type="ECO:0000312" key="9">
    <source>
        <dbReference type="EMBL" id="AAF79733.1"/>
    </source>
</evidence>
<gene>
    <name evidence="5 6" type="primary">SEC23B</name>
    <name evidence="4" type="synonym">SEC23C</name>
    <name evidence="8" type="ordered locus">At1g05520</name>
    <name evidence="9" type="ORF">T25N20.17</name>
</gene>
<feature type="chain" id="PRO_0000457102" description="Protein transport protein SEC23 B">
    <location>
        <begin position="1"/>
        <end position="783"/>
    </location>
</feature>
<feature type="region of interest" description="Zinc finger-like" evidence="1">
    <location>
        <begin position="59"/>
        <end position="84"/>
    </location>
</feature>
<feature type="binding site" evidence="2">
    <location>
        <position position="59"/>
    </location>
    <ligand>
        <name>Zn(2+)</name>
        <dbReference type="ChEBI" id="CHEBI:29105"/>
    </ligand>
</feature>
<feature type="binding site" evidence="2">
    <location>
        <position position="62"/>
    </location>
    <ligand>
        <name>Zn(2+)</name>
        <dbReference type="ChEBI" id="CHEBI:29105"/>
    </ligand>
</feature>
<feature type="binding site" evidence="2">
    <location>
        <position position="81"/>
    </location>
    <ligand>
        <name>Zn(2+)</name>
        <dbReference type="ChEBI" id="CHEBI:29105"/>
    </ligand>
</feature>
<feature type="binding site" evidence="2">
    <location>
        <position position="84"/>
    </location>
    <ligand>
        <name>Zn(2+)</name>
        <dbReference type="ChEBI" id="CHEBI:29105"/>
    </ligand>
</feature>
<feature type="sequence conflict" description="In Ref. 3; AAL08282." evidence="7" ref="3">
    <original>G</original>
    <variation>A</variation>
    <location>
        <position position="413"/>
    </location>
</feature>
<feature type="sequence conflict" description="In Ref. 3; AAL08282." evidence="7" ref="3">
    <original>N</original>
    <variation>S</variation>
    <location>
        <position position="422"/>
    </location>
</feature>
<protein>
    <recommendedName>
        <fullName evidence="5 6">Protein transport protein SEC23 B</fullName>
        <shortName evidence="5">AtSEC23B</shortName>
    </recommendedName>
    <alternativeName>
        <fullName evidence="4">Protein transport protein SEC23 C</fullName>
        <shortName evidence="4">AtSEC23C</shortName>
    </alternativeName>
</protein>
<reference key="1">
    <citation type="journal article" date="2000" name="Nature">
        <title>Sequence and analysis of chromosome 1 of the plant Arabidopsis thaliana.</title>
        <authorList>
            <person name="Theologis A."/>
            <person name="Ecker J.R."/>
            <person name="Palm C.J."/>
            <person name="Federspiel N.A."/>
            <person name="Kaul S."/>
            <person name="White O."/>
            <person name="Alonso J."/>
            <person name="Altafi H."/>
            <person name="Araujo R."/>
            <person name="Bowman C.L."/>
            <person name="Brooks S.Y."/>
            <person name="Buehler E."/>
            <person name="Chan A."/>
            <person name="Chao Q."/>
            <person name="Chen H."/>
            <person name="Cheuk R.F."/>
            <person name="Chin C.W."/>
            <person name="Chung M.K."/>
            <person name="Conn L."/>
            <person name="Conway A.B."/>
            <person name="Conway A.R."/>
            <person name="Creasy T.H."/>
            <person name="Dewar K."/>
            <person name="Dunn P."/>
            <person name="Etgu P."/>
            <person name="Feldblyum T.V."/>
            <person name="Feng J.-D."/>
            <person name="Fong B."/>
            <person name="Fujii C.Y."/>
            <person name="Gill J.E."/>
            <person name="Goldsmith A.D."/>
            <person name="Haas B."/>
            <person name="Hansen N.F."/>
            <person name="Hughes B."/>
            <person name="Huizar L."/>
            <person name="Hunter J.L."/>
            <person name="Jenkins J."/>
            <person name="Johnson-Hopson C."/>
            <person name="Khan S."/>
            <person name="Khaykin E."/>
            <person name="Kim C.J."/>
            <person name="Koo H.L."/>
            <person name="Kremenetskaia I."/>
            <person name="Kurtz D.B."/>
            <person name="Kwan A."/>
            <person name="Lam B."/>
            <person name="Langin-Hooper S."/>
            <person name="Lee A."/>
            <person name="Lee J.M."/>
            <person name="Lenz C.A."/>
            <person name="Li J.H."/>
            <person name="Li Y.-P."/>
            <person name="Lin X."/>
            <person name="Liu S.X."/>
            <person name="Liu Z.A."/>
            <person name="Luros J.S."/>
            <person name="Maiti R."/>
            <person name="Marziali A."/>
            <person name="Militscher J."/>
            <person name="Miranda M."/>
            <person name="Nguyen M."/>
            <person name="Nierman W.C."/>
            <person name="Osborne B.I."/>
            <person name="Pai G."/>
            <person name="Peterson J."/>
            <person name="Pham P.K."/>
            <person name="Rizzo M."/>
            <person name="Rooney T."/>
            <person name="Rowley D."/>
            <person name="Sakano H."/>
            <person name="Salzberg S.L."/>
            <person name="Schwartz J.R."/>
            <person name="Shinn P."/>
            <person name="Southwick A.M."/>
            <person name="Sun H."/>
            <person name="Tallon L.J."/>
            <person name="Tambunga G."/>
            <person name="Toriumi M.J."/>
            <person name="Town C.D."/>
            <person name="Utterback T."/>
            <person name="Van Aken S."/>
            <person name="Vaysberg M."/>
            <person name="Vysotskaia V.S."/>
            <person name="Walker M."/>
            <person name="Wu D."/>
            <person name="Yu G."/>
            <person name="Fraser C.M."/>
            <person name="Venter J.C."/>
            <person name="Davis R.W."/>
        </authorList>
    </citation>
    <scope>NUCLEOTIDE SEQUENCE [LARGE SCALE GENOMIC DNA]</scope>
    <source>
        <strain>cv. Columbia</strain>
    </source>
</reference>
<reference key="2">
    <citation type="journal article" date="2017" name="Plant J.">
        <title>Araport11: a complete reannotation of the Arabidopsis thaliana reference genome.</title>
        <authorList>
            <person name="Cheng C.Y."/>
            <person name="Krishnakumar V."/>
            <person name="Chan A.P."/>
            <person name="Thibaud-Nissen F."/>
            <person name="Schobel S."/>
            <person name="Town C.D."/>
        </authorList>
    </citation>
    <scope>GENOME REANNOTATION</scope>
    <source>
        <strain>cv. Columbia</strain>
    </source>
</reference>
<reference key="3">
    <citation type="journal article" date="2003" name="Science">
        <title>Empirical analysis of transcriptional activity in the Arabidopsis genome.</title>
        <authorList>
            <person name="Yamada K."/>
            <person name="Lim J."/>
            <person name="Dale J.M."/>
            <person name="Chen H."/>
            <person name="Shinn P."/>
            <person name="Palm C.J."/>
            <person name="Southwick A.M."/>
            <person name="Wu H.C."/>
            <person name="Kim C.J."/>
            <person name="Nguyen M."/>
            <person name="Pham P.K."/>
            <person name="Cheuk R.F."/>
            <person name="Karlin-Newmann G."/>
            <person name="Liu S.X."/>
            <person name="Lam B."/>
            <person name="Sakano H."/>
            <person name="Wu T."/>
            <person name="Yu G."/>
            <person name="Miranda M."/>
            <person name="Quach H.L."/>
            <person name="Tripp M."/>
            <person name="Chang C.H."/>
            <person name="Lee J.M."/>
            <person name="Toriumi M.J."/>
            <person name="Chan M.M."/>
            <person name="Tang C.C."/>
            <person name="Onodera C.S."/>
            <person name="Deng J.M."/>
            <person name="Akiyama K."/>
            <person name="Ansari Y."/>
            <person name="Arakawa T."/>
            <person name="Banh J."/>
            <person name="Banno F."/>
            <person name="Bowser L."/>
            <person name="Brooks S.Y."/>
            <person name="Carninci P."/>
            <person name="Chao Q."/>
            <person name="Choy N."/>
            <person name="Enju A."/>
            <person name="Goldsmith A.D."/>
            <person name="Gurjal M."/>
            <person name="Hansen N.F."/>
            <person name="Hayashizaki Y."/>
            <person name="Johnson-Hopson C."/>
            <person name="Hsuan V.W."/>
            <person name="Iida K."/>
            <person name="Karnes M."/>
            <person name="Khan S."/>
            <person name="Koesema E."/>
            <person name="Ishida J."/>
            <person name="Jiang P.X."/>
            <person name="Jones T."/>
            <person name="Kawai J."/>
            <person name="Kamiya A."/>
            <person name="Meyers C."/>
            <person name="Nakajima M."/>
            <person name="Narusaka M."/>
            <person name="Seki M."/>
            <person name="Sakurai T."/>
            <person name="Satou M."/>
            <person name="Tamse R."/>
            <person name="Vaysberg M."/>
            <person name="Wallender E.K."/>
            <person name="Wong C."/>
            <person name="Yamamura Y."/>
            <person name="Yuan S."/>
            <person name="Shinozaki K."/>
            <person name="Davis R.W."/>
            <person name="Theologis A."/>
            <person name="Ecker J.R."/>
        </authorList>
    </citation>
    <scope>NUCLEOTIDE SEQUENCE [LARGE SCALE MRNA]</scope>
    <source>
        <strain>cv. Columbia</strain>
    </source>
</reference>
<reference key="4">
    <citation type="journal article" date="2012" name="Mol. Cell. Proteomics">
        <title>Comparative large-scale characterisation of plant vs. mammal proteins reveals similar and idiosyncratic N-alpha acetylation features.</title>
        <authorList>
            <person name="Bienvenut W.V."/>
            <person name="Sumpton D."/>
            <person name="Martinez A."/>
            <person name="Lilla S."/>
            <person name="Espagne C."/>
            <person name="Meinnel T."/>
            <person name="Giglione C."/>
        </authorList>
    </citation>
    <scope>IDENTIFICATION BY MASS SPECTROMETRY [LARGE SCALE ANALYSIS]</scope>
</reference>
<reference key="5">
    <citation type="journal article" date="2014" name="Plant Physiol.">
        <title>Endomembrane trafficking protein SEC24A regulates cell size patterning in Arabidopsis.</title>
        <authorList>
            <person name="Qu X."/>
            <person name="Chatty P.R."/>
            <person name="Roeder A.H.K."/>
        </authorList>
    </citation>
    <scope>INTERACTION WITH SEC24A</scope>
    <scope>GENE FAMILY</scope>
    <source>
        <strain>cv. Landsberg erecta</strain>
    </source>
</reference>
<reference key="6">
    <citation type="journal article" date="2014" name="PLoS ONE">
        <title>Study of the plant COPII vesicle coat subunits by functional complementation of yeast Saccharomyces cerevisiae mutants.</title>
        <authorList>
            <person name="De Craene J.-O."/>
            <person name="Courte F."/>
            <person name="Rinaldi B."/>
            <person name="Fitterer C."/>
            <person name="Herranz M.C."/>
            <person name="Schmitt-Keichinger C."/>
            <person name="Ritzenthaler C."/>
            <person name="Friant S."/>
        </authorList>
    </citation>
    <scope>GENE FAMILY</scope>
    <source>
        <strain>cv. Columbia</strain>
    </source>
</reference>
<reference key="7">
    <citation type="journal article" date="2016" name="Trends Plant Sci.">
        <title>COPII paralogs in plants: functional redundancy or diversity?</title>
        <authorList>
            <person name="Chung K.P."/>
            <person name="Zeng Y."/>
            <person name="Jiang L."/>
        </authorList>
    </citation>
    <scope>REVIEW ON COAT PROTEIN COMPLEX II (COPII) VESICLES</scope>
    <scope>GENE FAMILY</scope>
    <scope>NOMENCLATURE</scope>
</reference>
<accession>Q8H0S3</accession>
<accession>Q93ZN7</accession>
<accession>Q9ZVY6</accession>
<name>SC23B_ARATH</name>
<organism>
    <name type="scientific">Arabidopsis thaliana</name>
    <name type="common">Mouse-ear cress</name>
    <dbReference type="NCBI Taxonomy" id="3702"/>
    <lineage>
        <taxon>Eukaryota</taxon>
        <taxon>Viridiplantae</taxon>
        <taxon>Streptophyta</taxon>
        <taxon>Embryophyta</taxon>
        <taxon>Tracheophyta</taxon>
        <taxon>Spermatophyta</taxon>
        <taxon>Magnoliopsida</taxon>
        <taxon>eudicotyledons</taxon>
        <taxon>Gunneridae</taxon>
        <taxon>Pentapetalae</taxon>
        <taxon>rosids</taxon>
        <taxon>malvids</taxon>
        <taxon>Brassicales</taxon>
        <taxon>Brassicaceae</taxon>
        <taxon>Camelineae</taxon>
        <taxon>Arabidopsis</taxon>
    </lineage>
</organism>
<dbReference type="EMBL" id="AC005106">
    <property type="protein sequence ID" value="AAF79733.1"/>
    <property type="status" value="ALT_SEQ"/>
    <property type="molecule type" value="Genomic_DNA"/>
</dbReference>
<dbReference type="EMBL" id="CP002684">
    <property type="protein sequence ID" value="AEE27848.1"/>
    <property type="molecule type" value="Genomic_DNA"/>
</dbReference>
<dbReference type="EMBL" id="AY056426">
    <property type="protein sequence ID" value="AAL08282.1"/>
    <property type="molecule type" value="mRNA"/>
</dbReference>
<dbReference type="EMBL" id="BT002235">
    <property type="protein sequence ID" value="AAN72246.1"/>
    <property type="molecule type" value="mRNA"/>
</dbReference>
<dbReference type="RefSeq" id="NP_563741.1">
    <property type="nucleotide sequence ID" value="NM_100431.2"/>
</dbReference>
<dbReference type="SMR" id="Q8H0S3"/>
<dbReference type="FunCoup" id="Q8H0S3">
    <property type="interactions" value="4468"/>
</dbReference>
<dbReference type="STRING" id="3702.Q8H0S3"/>
<dbReference type="iPTMnet" id="Q8H0S3"/>
<dbReference type="PaxDb" id="3702-AT1G05520.1"/>
<dbReference type="ProMEX" id="Q8H0S3"/>
<dbReference type="ProteomicsDB" id="183576"/>
<dbReference type="EnsemblPlants" id="AT1G05520.1">
    <property type="protein sequence ID" value="AT1G05520.1"/>
    <property type="gene ID" value="AT1G05520"/>
</dbReference>
<dbReference type="GeneID" id="837054"/>
<dbReference type="Gramene" id="AT1G05520.1">
    <property type="protein sequence ID" value="AT1G05520.1"/>
    <property type="gene ID" value="AT1G05520"/>
</dbReference>
<dbReference type="KEGG" id="ath:AT1G05520"/>
<dbReference type="Araport" id="AT1G05520"/>
<dbReference type="TAIR" id="AT1G05520">
    <property type="gene designation" value="ATSEC23B"/>
</dbReference>
<dbReference type="eggNOG" id="KOG1986">
    <property type="taxonomic scope" value="Eukaryota"/>
</dbReference>
<dbReference type="HOGENOM" id="CLU_008658_3_0_1"/>
<dbReference type="InParanoid" id="Q8H0S3"/>
<dbReference type="OMA" id="VGGFPMG"/>
<dbReference type="OrthoDB" id="10256289at2759"/>
<dbReference type="CD-CODE" id="4299E36E">
    <property type="entry name" value="Nucleolus"/>
</dbReference>
<dbReference type="PRO" id="PR:Q8H0S3"/>
<dbReference type="Proteomes" id="UP000006548">
    <property type="component" value="Chromosome 1"/>
</dbReference>
<dbReference type="ExpressionAtlas" id="Q8H0S3">
    <property type="expression patterns" value="baseline and differential"/>
</dbReference>
<dbReference type="GO" id="GO:0030127">
    <property type="term" value="C:COPII vesicle coat"/>
    <property type="evidence" value="ECO:0007669"/>
    <property type="project" value="InterPro"/>
</dbReference>
<dbReference type="GO" id="GO:0005789">
    <property type="term" value="C:endoplasmic reticulum membrane"/>
    <property type="evidence" value="ECO:0007669"/>
    <property type="project" value="UniProtKB-SubCell"/>
</dbReference>
<dbReference type="GO" id="GO:0005576">
    <property type="term" value="C:extracellular region"/>
    <property type="evidence" value="ECO:0007005"/>
    <property type="project" value="TAIR"/>
</dbReference>
<dbReference type="GO" id="GO:0008270">
    <property type="term" value="F:zinc ion binding"/>
    <property type="evidence" value="ECO:0007669"/>
    <property type="project" value="InterPro"/>
</dbReference>
<dbReference type="GO" id="GO:0090114">
    <property type="term" value="P:COPII-coated vesicle budding"/>
    <property type="evidence" value="ECO:0007669"/>
    <property type="project" value="InterPro"/>
</dbReference>
<dbReference type="GO" id="GO:0006886">
    <property type="term" value="P:intracellular protein transport"/>
    <property type="evidence" value="ECO:0007669"/>
    <property type="project" value="InterPro"/>
</dbReference>
<dbReference type="CDD" id="cd11287">
    <property type="entry name" value="Sec23_C"/>
    <property type="match status" value="1"/>
</dbReference>
<dbReference type="FunFam" id="1.20.120.730:FF:000005">
    <property type="entry name" value="Protein transport protein SEC23"/>
    <property type="match status" value="1"/>
</dbReference>
<dbReference type="FunFam" id="2.30.30.380:FF:000001">
    <property type="entry name" value="Protein transport protein SEC23"/>
    <property type="match status" value="1"/>
</dbReference>
<dbReference type="FunFam" id="3.40.20.10:FF:000014">
    <property type="entry name" value="Protein transport protein SEC23"/>
    <property type="match status" value="1"/>
</dbReference>
<dbReference type="FunFam" id="3.40.50.410:FF:000008">
    <property type="entry name" value="Protein transport protein SEC23"/>
    <property type="match status" value="1"/>
</dbReference>
<dbReference type="Gene3D" id="2.60.40.1670">
    <property type="entry name" value="beta-sandwich domain of Sec23/24"/>
    <property type="match status" value="1"/>
</dbReference>
<dbReference type="Gene3D" id="1.20.120.730">
    <property type="entry name" value="Sec23/Sec24 helical domain"/>
    <property type="match status" value="1"/>
</dbReference>
<dbReference type="Gene3D" id="3.40.20.10">
    <property type="entry name" value="Severin"/>
    <property type="match status" value="1"/>
</dbReference>
<dbReference type="Gene3D" id="3.40.50.410">
    <property type="entry name" value="von Willebrand factor, type A domain"/>
    <property type="match status" value="1"/>
</dbReference>
<dbReference type="Gene3D" id="2.30.30.380">
    <property type="entry name" value="Zn-finger domain of Sec23/24"/>
    <property type="match status" value="1"/>
</dbReference>
<dbReference type="InterPro" id="IPR029006">
    <property type="entry name" value="ADF-H/Gelsolin-like_dom_sf"/>
</dbReference>
<dbReference type="InterPro" id="IPR007123">
    <property type="entry name" value="Gelsolin-like_dom"/>
</dbReference>
<dbReference type="InterPro" id="IPR036180">
    <property type="entry name" value="Gelsolin-like_dom_sf"/>
</dbReference>
<dbReference type="InterPro" id="IPR037364">
    <property type="entry name" value="Sec23"/>
</dbReference>
<dbReference type="InterPro" id="IPR006900">
    <property type="entry name" value="Sec23/24_helical_dom"/>
</dbReference>
<dbReference type="InterPro" id="IPR036175">
    <property type="entry name" value="Sec23/24_helical_dom_sf"/>
</dbReference>
<dbReference type="InterPro" id="IPR006896">
    <property type="entry name" value="Sec23/24_trunk_dom"/>
</dbReference>
<dbReference type="InterPro" id="IPR012990">
    <property type="entry name" value="Sec23_24_beta_S"/>
</dbReference>
<dbReference type="InterPro" id="IPR037550">
    <property type="entry name" value="Sec23_C"/>
</dbReference>
<dbReference type="InterPro" id="IPR036465">
    <property type="entry name" value="vWFA_dom_sf"/>
</dbReference>
<dbReference type="InterPro" id="IPR006895">
    <property type="entry name" value="Znf_Sec23_Sec24"/>
</dbReference>
<dbReference type="InterPro" id="IPR036174">
    <property type="entry name" value="Znf_Sec23_Sec24_sf"/>
</dbReference>
<dbReference type="PANTHER" id="PTHR11141">
    <property type="entry name" value="PROTEIN TRANSPORT PROTEIN SEC23"/>
    <property type="match status" value="1"/>
</dbReference>
<dbReference type="PANTHER" id="PTHR11141:SF23">
    <property type="entry name" value="PROTEIN TRANSPORT PROTEIN SEC23 B"/>
    <property type="match status" value="1"/>
</dbReference>
<dbReference type="Pfam" id="PF00626">
    <property type="entry name" value="Gelsolin"/>
    <property type="match status" value="1"/>
</dbReference>
<dbReference type="Pfam" id="PF08033">
    <property type="entry name" value="Sec23_BS"/>
    <property type="match status" value="1"/>
</dbReference>
<dbReference type="Pfam" id="PF04815">
    <property type="entry name" value="Sec23_helical"/>
    <property type="match status" value="1"/>
</dbReference>
<dbReference type="Pfam" id="PF04811">
    <property type="entry name" value="Sec23_trunk"/>
    <property type="match status" value="1"/>
</dbReference>
<dbReference type="Pfam" id="PF04810">
    <property type="entry name" value="zf-Sec23_Sec24"/>
    <property type="match status" value="1"/>
</dbReference>
<dbReference type="SUPFAM" id="SSF81995">
    <property type="entry name" value="beta-sandwich domain of Sec23/24"/>
    <property type="match status" value="1"/>
</dbReference>
<dbReference type="SUPFAM" id="SSF82754">
    <property type="entry name" value="C-terminal, gelsolin-like domain of Sec23/24"/>
    <property type="match status" value="1"/>
</dbReference>
<dbReference type="SUPFAM" id="SSF81811">
    <property type="entry name" value="Helical domain of Sec23/24"/>
    <property type="match status" value="1"/>
</dbReference>
<dbReference type="SUPFAM" id="SSF53300">
    <property type="entry name" value="vWA-like"/>
    <property type="match status" value="1"/>
</dbReference>
<dbReference type="SUPFAM" id="SSF82919">
    <property type="entry name" value="Zn-finger domain of Sec23/24"/>
    <property type="match status" value="1"/>
</dbReference>
<sequence>MSEMASMDPEGIDGVRMTWNVWPRTKVEASKCVIPVAACISPIRYHRDIPSVEYAPLRCRICTAALNPFARVDFLAKIWICPICFQRNHFPPHYHVMSETNVPCELYPQYTTVEYTLPNPSQPTGVGNFDQTGAVSGQPSPSVFVFVLDTCMIEEEFGYAKSALKQAIGLLPENALVGFVSFGTQAHVHELGFSDLTKVYVFRGDKEISKDQVLEQLGLGASGRRNPVGGFPMGRDNSANFGYSGVNRFLLPASDCEFTIDLLLEELQTDQWPVQAGRRQSRCTGVAISVATGLLGACFPGTGARIVALIGGPCSEGPGTIVSKDLSEPLRSHKDLDKDAAPFYKKAEKFYDALANQLVNQGHVLDLFASALDQVGVAEMKAAVERTGGLVVLSESFGHSVFKDSFKRVFEDGEESLGLCFNGTLEICCSKDIKIQGIIGPCASLQKKGPSVADTVIGEGNTTQWKMCGLDKRTCLTVFFDLSSSDQSSAPGGVNNQLYLQFMTSYQNSKGKTLQRVTTVTRQWVDTGLSTEELVQGFDQETAAVVVARLASLKMETEEGFDATRWLDRNLIRLCSKFGDYRKDDPASFTLNPNFSLFPQFTFNLRRSQFVQVFNNSPDETAYNRMLLNRENISNAAVMIQPSLTTYSFNSLPQPALLDVASIGADRILLLDSYISVVVFHGMTIAQWRNLGYQNQPEHQAFAQLLEAPQEDAQMIIRDRFPVPRLVVCDQHGSQARFLLAKLNPSATYNNASEMNAGSDIIFTDDVSLQVFFQHLQKLAVQS</sequence>